<proteinExistence type="evidence at protein level"/>
<reference key="1">
    <citation type="journal article" date="2005" name="FEBS Lett.">
        <title>Expression of pro-apoptotic Bfk isoforms reduces during malignant transformation in the human gastrointestinal tract.</title>
        <authorList>
            <person name="Dempsey C.E."/>
            <person name="Dive C."/>
            <person name="Fletcher D.J."/>
            <person name="Barnes F.A."/>
            <person name="Lobo A."/>
            <person name="Bingle C.D."/>
            <person name="Whyte M.K."/>
            <person name="Renshaw S.A."/>
        </authorList>
    </citation>
    <scope>NUCLEOTIDE SEQUENCE [MRNA] (ISOFORM 2)</scope>
</reference>
<reference key="2">
    <citation type="journal article" date="2004" name="Nat. Genet.">
        <title>Complete sequencing and characterization of 21,243 full-length human cDNAs.</title>
        <authorList>
            <person name="Ota T."/>
            <person name="Suzuki Y."/>
            <person name="Nishikawa T."/>
            <person name="Otsuki T."/>
            <person name="Sugiyama T."/>
            <person name="Irie R."/>
            <person name="Wakamatsu A."/>
            <person name="Hayashi K."/>
            <person name="Sato H."/>
            <person name="Nagai K."/>
            <person name="Kimura K."/>
            <person name="Makita H."/>
            <person name="Sekine M."/>
            <person name="Obayashi M."/>
            <person name="Nishi T."/>
            <person name="Shibahara T."/>
            <person name="Tanaka T."/>
            <person name="Ishii S."/>
            <person name="Yamamoto J."/>
            <person name="Saito K."/>
            <person name="Kawai Y."/>
            <person name="Isono Y."/>
            <person name="Nakamura Y."/>
            <person name="Nagahari K."/>
            <person name="Murakami K."/>
            <person name="Yasuda T."/>
            <person name="Iwayanagi T."/>
            <person name="Wagatsuma M."/>
            <person name="Shiratori A."/>
            <person name="Sudo H."/>
            <person name="Hosoiri T."/>
            <person name="Kaku Y."/>
            <person name="Kodaira H."/>
            <person name="Kondo H."/>
            <person name="Sugawara M."/>
            <person name="Takahashi M."/>
            <person name="Kanda K."/>
            <person name="Yokoi T."/>
            <person name="Furuya T."/>
            <person name="Kikkawa E."/>
            <person name="Omura Y."/>
            <person name="Abe K."/>
            <person name="Kamihara K."/>
            <person name="Katsuta N."/>
            <person name="Sato K."/>
            <person name="Tanikawa M."/>
            <person name="Yamazaki M."/>
            <person name="Ninomiya K."/>
            <person name="Ishibashi T."/>
            <person name="Yamashita H."/>
            <person name="Murakawa K."/>
            <person name="Fujimori K."/>
            <person name="Tanai H."/>
            <person name="Kimata M."/>
            <person name="Watanabe M."/>
            <person name="Hiraoka S."/>
            <person name="Chiba Y."/>
            <person name="Ishida S."/>
            <person name="Ono Y."/>
            <person name="Takiguchi S."/>
            <person name="Watanabe S."/>
            <person name="Yosida M."/>
            <person name="Hotuta T."/>
            <person name="Kusano J."/>
            <person name="Kanehori K."/>
            <person name="Takahashi-Fujii A."/>
            <person name="Hara H."/>
            <person name="Tanase T.-O."/>
            <person name="Nomura Y."/>
            <person name="Togiya S."/>
            <person name="Komai F."/>
            <person name="Hara R."/>
            <person name="Takeuchi K."/>
            <person name="Arita M."/>
            <person name="Imose N."/>
            <person name="Musashino K."/>
            <person name="Yuuki H."/>
            <person name="Oshima A."/>
            <person name="Sasaki N."/>
            <person name="Aotsuka S."/>
            <person name="Yoshikawa Y."/>
            <person name="Matsunawa H."/>
            <person name="Ichihara T."/>
            <person name="Shiohata N."/>
            <person name="Sano S."/>
            <person name="Moriya S."/>
            <person name="Momiyama H."/>
            <person name="Satoh N."/>
            <person name="Takami S."/>
            <person name="Terashima Y."/>
            <person name="Suzuki O."/>
            <person name="Nakagawa S."/>
            <person name="Senoh A."/>
            <person name="Mizoguchi H."/>
            <person name="Goto Y."/>
            <person name="Shimizu F."/>
            <person name="Wakebe H."/>
            <person name="Hishigaki H."/>
            <person name="Watanabe T."/>
            <person name="Sugiyama A."/>
            <person name="Takemoto M."/>
            <person name="Kawakami B."/>
            <person name="Yamazaki M."/>
            <person name="Watanabe K."/>
            <person name="Kumagai A."/>
            <person name="Itakura S."/>
            <person name="Fukuzumi Y."/>
            <person name="Fujimori Y."/>
            <person name="Komiyama M."/>
            <person name="Tashiro H."/>
            <person name="Tanigami A."/>
            <person name="Fujiwara T."/>
            <person name="Ono T."/>
            <person name="Yamada K."/>
            <person name="Fujii Y."/>
            <person name="Ozaki K."/>
            <person name="Hirao M."/>
            <person name="Ohmori Y."/>
            <person name="Kawabata A."/>
            <person name="Hikiji T."/>
            <person name="Kobatake N."/>
            <person name="Inagaki H."/>
            <person name="Ikema Y."/>
            <person name="Okamoto S."/>
            <person name="Okitani R."/>
            <person name="Kawakami T."/>
            <person name="Noguchi S."/>
            <person name="Itoh T."/>
            <person name="Shigeta K."/>
            <person name="Senba T."/>
            <person name="Matsumura K."/>
            <person name="Nakajima Y."/>
            <person name="Mizuno T."/>
            <person name="Morinaga M."/>
            <person name="Sasaki M."/>
            <person name="Togashi T."/>
            <person name="Oyama M."/>
            <person name="Hata H."/>
            <person name="Watanabe M."/>
            <person name="Komatsu T."/>
            <person name="Mizushima-Sugano J."/>
            <person name="Satoh T."/>
            <person name="Shirai Y."/>
            <person name="Takahashi Y."/>
            <person name="Nakagawa K."/>
            <person name="Okumura K."/>
            <person name="Nagase T."/>
            <person name="Nomura N."/>
            <person name="Kikuchi H."/>
            <person name="Masuho Y."/>
            <person name="Yamashita R."/>
            <person name="Nakai K."/>
            <person name="Yada T."/>
            <person name="Nakamura Y."/>
            <person name="Ohara O."/>
            <person name="Isogai T."/>
            <person name="Sugano S."/>
        </authorList>
    </citation>
    <scope>NUCLEOTIDE SEQUENCE [LARGE SCALE MRNA] (ISOFORM 1)</scope>
    <scope>VARIANT ASN-90</scope>
    <source>
        <tissue>Urinary bladder</tissue>
    </source>
</reference>
<reference key="3">
    <citation type="journal article" date="2006" name="Nature">
        <title>The DNA sequence and biological annotation of human chromosome 1.</title>
        <authorList>
            <person name="Gregory S.G."/>
            <person name="Barlow K.F."/>
            <person name="McLay K.E."/>
            <person name="Kaul R."/>
            <person name="Swarbreck D."/>
            <person name="Dunham A."/>
            <person name="Scott C.E."/>
            <person name="Howe K.L."/>
            <person name="Woodfine K."/>
            <person name="Spencer C.C.A."/>
            <person name="Jones M.C."/>
            <person name="Gillson C."/>
            <person name="Searle S."/>
            <person name="Zhou Y."/>
            <person name="Kokocinski F."/>
            <person name="McDonald L."/>
            <person name="Evans R."/>
            <person name="Phillips K."/>
            <person name="Atkinson A."/>
            <person name="Cooper R."/>
            <person name="Jones C."/>
            <person name="Hall R.E."/>
            <person name="Andrews T.D."/>
            <person name="Lloyd C."/>
            <person name="Ainscough R."/>
            <person name="Almeida J.P."/>
            <person name="Ambrose K.D."/>
            <person name="Anderson F."/>
            <person name="Andrew R.W."/>
            <person name="Ashwell R.I.S."/>
            <person name="Aubin K."/>
            <person name="Babbage A.K."/>
            <person name="Bagguley C.L."/>
            <person name="Bailey J."/>
            <person name="Beasley H."/>
            <person name="Bethel G."/>
            <person name="Bird C.P."/>
            <person name="Bray-Allen S."/>
            <person name="Brown J.Y."/>
            <person name="Brown A.J."/>
            <person name="Buckley D."/>
            <person name="Burton J."/>
            <person name="Bye J."/>
            <person name="Carder C."/>
            <person name="Chapman J.C."/>
            <person name="Clark S.Y."/>
            <person name="Clarke G."/>
            <person name="Clee C."/>
            <person name="Cobley V."/>
            <person name="Collier R.E."/>
            <person name="Corby N."/>
            <person name="Coville G.J."/>
            <person name="Davies J."/>
            <person name="Deadman R."/>
            <person name="Dunn M."/>
            <person name="Earthrowl M."/>
            <person name="Ellington A.G."/>
            <person name="Errington H."/>
            <person name="Frankish A."/>
            <person name="Frankland J."/>
            <person name="French L."/>
            <person name="Garner P."/>
            <person name="Garnett J."/>
            <person name="Gay L."/>
            <person name="Ghori M.R.J."/>
            <person name="Gibson R."/>
            <person name="Gilby L.M."/>
            <person name="Gillett W."/>
            <person name="Glithero R.J."/>
            <person name="Grafham D.V."/>
            <person name="Griffiths C."/>
            <person name="Griffiths-Jones S."/>
            <person name="Grocock R."/>
            <person name="Hammond S."/>
            <person name="Harrison E.S.I."/>
            <person name="Hart E."/>
            <person name="Haugen E."/>
            <person name="Heath P.D."/>
            <person name="Holmes S."/>
            <person name="Holt K."/>
            <person name="Howden P.J."/>
            <person name="Hunt A.R."/>
            <person name="Hunt S.E."/>
            <person name="Hunter G."/>
            <person name="Isherwood J."/>
            <person name="James R."/>
            <person name="Johnson C."/>
            <person name="Johnson D."/>
            <person name="Joy A."/>
            <person name="Kay M."/>
            <person name="Kershaw J.K."/>
            <person name="Kibukawa M."/>
            <person name="Kimberley A.M."/>
            <person name="King A."/>
            <person name="Knights A.J."/>
            <person name="Lad H."/>
            <person name="Laird G."/>
            <person name="Lawlor S."/>
            <person name="Leongamornlert D.A."/>
            <person name="Lloyd D.M."/>
            <person name="Loveland J."/>
            <person name="Lovell J."/>
            <person name="Lush M.J."/>
            <person name="Lyne R."/>
            <person name="Martin S."/>
            <person name="Mashreghi-Mohammadi M."/>
            <person name="Matthews L."/>
            <person name="Matthews N.S.W."/>
            <person name="McLaren S."/>
            <person name="Milne S."/>
            <person name="Mistry S."/>
            <person name="Moore M.J.F."/>
            <person name="Nickerson T."/>
            <person name="O'Dell C.N."/>
            <person name="Oliver K."/>
            <person name="Palmeiri A."/>
            <person name="Palmer S.A."/>
            <person name="Parker A."/>
            <person name="Patel D."/>
            <person name="Pearce A.V."/>
            <person name="Peck A.I."/>
            <person name="Pelan S."/>
            <person name="Phelps K."/>
            <person name="Phillimore B.J."/>
            <person name="Plumb R."/>
            <person name="Rajan J."/>
            <person name="Raymond C."/>
            <person name="Rouse G."/>
            <person name="Saenphimmachak C."/>
            <person name="Sehra H.K."/>
            <person name="Sheridan E."/>
            <person name="Shownkeen R."/>
            <person name="Sims S."/>
            <person name="Skuce C.D."/>
            <person name="Smith M."/>
            <person name="Steward C."/>
            <person name="Subramanian S."/>
            <person name="Sycamore N."/>
            <person name="Tracey A."/>
            <person name="Tromans A."/>
            <person name="Van Helmond Z."/>
            <person name="Wall M."/>
            <person name="Wallis J.M."/>
            <person name="White S."/>
            <person name="Whitehead S.L."/>
            <person name="Wilkinson J.E."/>
            <person name="Willey D.L."/>
            <person name="Williams H."/>
            <person name="Wilming L."/>
            <person name="Wray P.W."/>
            <person name="Wu Z."/>
            <person name="Coulson A."/>
            <person name="Vaudin M."/>
            <person name="Sulston J.E."/>
            <person name="Durbin R.M."/>
            <person name="Hubbard T."/>
            <person name="Wooster R."/>
            <person name="Dunham I."/>
            <person name="Carter N.P."/>
            <person name="McVean G."/>
            <person name="Ross M.T."/>
            <person name="Harrow J."/>
            <person name="Olson M.V."/>
            <person name="Beck S."/>
            <person name="Rogers J."/>
            <person name="Bentley D.R."/>
        </authorList>
    </citation>
    <scope>NUCLEOTIDE SEQUENCE [LARGE SCALE GENOMIC DNA]</scope>
</reference>
<reference key="4">
    <citation type="journal article" date="2004" name="Genome Res.">
        <title>The status, quality, and expansion of the NIH full-length cDNA project: the Mammalian Gene Collection (MGC).</title>
        <authorList>
            <consortium name="The MGC Project Team"/>
        </authorList>
    </citation>
    <scope>NUCLEOTIDE SEQUENCE [LARGE SCALE MRNA] (ISOFORM 1)</scope>
    <scope>VARIANT ASN-90</scope>
</reference>
<gene>
    <name type="primary">BCL2L15</name>
    <name type="synonym">C1orf178</name>
</gene>
<organism>
    <name type="scientific">Homo sapiens</name>
    <name type="common">Human</name>
    <dbReference type="NCBI Taxonomy" id="9606"/>
    <lineage>
        <taxon>Eukaryota</taxon>
        <taxon>Metazoa</taxon>
        <taxon>Chordata</taxon>
        <taxon>Craniata</taxon>
        <taxon>Vertebrata</taxon>
        <taxon>Euteleostomi</taxon>
        <taxon>Mammalia</taxon>
        <taxon>Eutheria</taxon>
        <taxon>Euarchontoglires</taxon>
        <taxon>Primates</taxon>
        <taxon>Haplorrhini</taxon>
        <taxon>Catarrhini</taxon>
        <taxon>Hominidae</taxon>
        <taxon>Homo</taxon>
    </lineage>
</organism>
<evidence type="ECO:0000269" key="1">
    <source>
    </source>
</evidence>
<evidence type="ECO:0000269" key="2">
    <source>
    </source>
</evidence>
<evidence type="ECO:0000303" key="3">
    <source>
    </source>
</evidence>
<evidence type="ECO:0000305" key="4"/>
<evidence type="ECO:0007829" key="5">
    <source>
        <dbReference type="PDB" id="7CCL"/>
    </source>
</evidence>
<evidence type="ECO:0007829" key="6">
    <source>
        <dbReference type="PDB" id="7CCM"/>
    </source>
</evidence>
<dbReference type="EMBL" id="AY265864">
    <property type="protein sequence ID" value="AAP93858.1"/>
    <property type="molecule type" value="mRNA"/>
</dbReference>
<dbReference type="EMBL" id="AK289439">
    <property type="protein sequence ID" value="BAF82128.1"/>
    <property type="molecule type" value="mRNA"/>
</dbReference>
<dbReference type="EMBL" id="AL137856">
    <property type="status" value="NOT_ANNOTATED_CDS"/>
    <property type="molecule type" value="Genomic_DNA"/>
</dbReference>
<dbReference type="EMBL" id="BC127719">
    <property type="protein sequence ID" value="AAI27720.1"/>
    <property type="molecule type" value="mRNA"/>
</dbReference>
<dbReference type="EMBL" id="BC127720">
    <property type="protein sequence ID" value="AAI27721.1"/>
    <property type="molecule type" value="mRNA"/>
</dbReference>
<dbReference type="CCDS" id="CCDS30809.1">
    <molecule id="Q5TBC7-1"/>
</dbReference>
<dbReference type="RefSeq" id="NP_001010922.1">
    <molecule id="Q5TBC7-1"/>
    <property type="nucleotide sequence ID" value="NM_001010922.3"/>
</dbReference>
<dbReference type="PDB" id="7CCL">
    <property type="method" value="X-ray"/>
    <property type="resolution" value="2.70 A"/>
    <property type="chains" value="A/B/C=1-163"/>
</dbReference>
<dbReference type="PDB" id="7CCM">
    <property type="method" value="X-ray"/>
    <property type="resolution" value="2.45 A"/>
    <property type="chains" value="A/B/C=1-163"/>
</dbReference>
<dbReference type="PDBsum" id="7CCL"/>
<dbReference type="PDBsum" id="7CCM"/>
<dbReference type="SMR" id="Q5TBC7"/>
<dbReference type="BioGRID" id="136727">
    <property type="interactions" value="17"/>
</dbReference>
<dbReference type="FunCoup" id="Q5TBC7">
    <property type="interactions" value="256"/>
</dbReference>
<dbReference type="IntAct" id="Q5TBC7">
    <property type="interactions" value="10"/>
</dbReference>
<dbReference type="STRING" id="9606.ENSP00000376992"/>
<dbReference type="GlyGen" id="Q5TBC7">
    <property type="glycosylation" value="1 site, 1 O-linked glycan (1 site)"/>
</dbReference>
<dbReference type="iPTMnet" id="Q5TBC7"/>
<dbReference type="PhosphoSitePlus" id="Q5TBC7"/>
<dbReference type="BioMuta" id="BCL2L15"/>
<dbReference type="DMDM" id="74745939"/>
<dbReference type="jPOST" id="Q5TBC7"/>
<dbReference type="MassIVE" id="Q5TBC7"/>
<dbReference type="PaxDb" id="9606-ENSP00000376992"/>
<dbReference type="PeptideAtlas" id="Q5TBC7"/>
<dbReference type="ProteomicsDB" id="64897">
    <molecule id="Q5TBC7-1"/>
</dbReference>
<dbReference type="Antibodypedia" id="33849">
    <property type="antibodies" value="144 antibodies from 25 providers"/>
</dbReference>
<dbReference type="DNASU" id="440603"/>
<dbReference type="Ensembl" id="ENST00000393316.8">
    <molecule id="Q5TBC7-1"/>
    <property type="protein sequence ID" value="ENSP00000376992.3"/>
    <property type="gene ID" value="ENSG00000188761.13"/>
</dbReference>
<dbReference type="Ensembl" id="ENST00000393320.3">
    <molecule id="Q5TBC7-2"/>
    <property type="protein sequence ID" value="ENSP00000376995.3"/>
    <property type="gene ID" value="ENSG00000188761.13"/>
</dbReference>
<dbReference type="GeneID" id="440603"/>
<dbReference type="KEGG" id="hsa:440603"/>
<dbReference type="MANE-Select" id="ENST00000393316.8">
    <property type="protein sequence ID" value="ENSP00000376992.3"/>
    <property type="RefSeq nucleotide sequence ID" value="NM_001010922.3"/>
    <property type="RefSeq protein sequence ID" value="NP_001010922.1"/>
</dbReference>
<dbReference type="UCSC" id="uc001edw.4">
    <molecule id="Q5TBC7-1"/>
    <property type="organism name" value="human"/>
</dbReference>
<dbReference type="AGR" id="HGNC:33624"/>
<dbReference type="CTD" id="440603"/>
<dbReference type="DisGeNET" id="440603"/>
<dbReference type="GeneCards" id="BCL2L15"/>
<dbReference type="HGNC" id="HGNC:33624">
    <property type="gene designation" value="BCL2L15"/>
</dbReference>
<dbReference type="HPA" id="ENSG00000188761">
    <property type="expression patterns" value="Tissue enhanced (bone marrow, intestine, stomach)"/>
</dbReference>
<dbReference type="MIM" id="619660">
    <property type="type" value="gene"/>
</dbReference>
<dbReference type="neXtProt" id="NX_Q5TBC7"/>
<dbReference type="OpenTargets" id="ENSG00000188761"/>
<dbReference type="PharmGKB" id="PA162377411"/>
<dbReference type="VEuPathDB" id="HostDB:ENSG00000188761"/>
<dbReference type="eggNOG" id="ENOG502SB5V">
    <property type="taxonomic scope" value="Eukaryota"/>
</dbReference>
<dbReference type="GeneTree" id="ENSGT00390000018096"/>
<dbReference type="HOGENOM" id="CLU_1626530_0_0_1"/>
<dbReference type="InParanoid" id="Q5TBC7"/>
<dbReference type="OMA" id="QVAISMT"/>
<dbReference type="OrthoDB" id="9950208at2759"/>
<dbReference type="PAN-GO" id="Q5TBC7">
    <property type="GO annotations" value="2 GO annotations based on evolutionary models"/>
</dbReference>
<dbReference type="PhylomeDB" id="Q5TBC7"/>
<dbReference type="TreeFam" id="TF338066"/>
<dbReference type="PathwayCommons" id="Q5TBC7"/>
<dbReference type="SignaLink" id="Q5TBC7"/>
<dbReference type="BioGRID-ORCS" id="440603">
    <property type="hits" value="13 hits in 1150 CRISPR screens"/>
</dbReference>
<dbReference type="GenomeRNAi" id="440603"/>
<dbReference type="Pharos" id="Q5TBC7">
    <property type="development level" value="Tbio"/>
</dbReference>
<dbReference type="PRO" id="PR:Q5TBC7"/>
<dbReference type="Proteomes" id="UP000005640">
    <property type="component" value="Chromosome 1"/>
</dbReference>
<dbReference type="RNAct" id="Q5TBC7">
    <property type="molecule type" value="protein"/>
</dbReference>
<dbReference type="Bgee" id="ENSG00000188761">
    <property type="expression patterns" value="Expressed in ileal mucosa and 120 other cell types or tissues"/>
</dbReference>
<dbReference type="ExpressionAtlas" id="Q5TBC7">
    <property type="expression patterns" value="baseline and differential"/>
</dbReference>
<dbReference type="GO" id="GO:0005829">
    <property type="term" value="C:cytosol"/>
    <property type="evidence" value="ECO:0000318"/>
    <property type="project" value="GO_Central"/>
</dbReference>
<dbReference type="GO" id="GO:0005634">
    <property type="term" value="C:nucleus"/>
    <property type="evidence" value="ECO:0000318"/>
    <property type="project" value="GO_Central"/>
</dbReference>
<dbReference type="GO" id="GO:0006915">
    <property type="term" value="P:apoptotic process"/>
    <property type="evidence" value="ECO:0007669"/>
    <property type="project" value="UniProtKB-KW"/>
</dbReference>
<dbReference type="GO" id="GO:0042981">
    <property type="term" value="P:regulation of apoptotic process"/>
    <property type="evidence" value="ECO:0007669"/>
    <property type="project" value="InterPro"/>
</dbReference>
<dbReference type="FunFam" id="1.10.437.10:FF:000018">
    <property type="entry name" value="BCL2 like 15"/>
    <property type="match status" value="1"/>
</dbReference>
<dbReference type="Gene3D" id="1.10.437.10">
    <property type="entry name" value="Blc2-like"/>
    <property type="match status" value="1"/>
</dbReference>
<dbReference type="InterPro" id="IPR036834">
    <property type="entry name" value="Bcl-2-like_sf"/>
</dbReference>
<dbReference type="InterPro" id="IPR033543">
    <property type="entry name" value="BCL2L15"/>
</dbReference>
<dbReference type="PANTHER" id="PTHR36466">
    <property type="entry name" value="BCL-2-LIKE PROTEIN 15"/>
    <property type="match status" value="1"/>
</dbReference>
<dbReference type="PANTHER" id="PTHR36466:SF1">
    <property type="entry name" value="BCL-2-LIKE PROTEIN 15"/>
    <property type="match status" value="1"/>
</dbReference>
<dbReference type="SUPFAM" id="SSF56854">
    <property type="entry name" value="Bcl-2 inhibitors of programmed cell death"/>
    <property type="match status" value="1"/>
</dbReference>
<name>B2L15_HUMAN</name>
<protein>
    <recommendedName>
        <fullName>Bcl-2-like protein 15</fullName>
        <shortName>Bcl2-L-15</shortName>
    </recommendedName>
    <alternativeName>
        <fullName>Bcl-2 family kin</fullName>
        <shortName evidence="3">Bfk</shortName>
    </alternativeName>
</protein>
<keyword id="KW-0002">3D-structure</keyword>
<keyword id="KW-0025">Alternative splicing</keyword>
<keyword id="KW-0053">Apoptosis</keyword>
<keyword id="KW-1267">Proteomics identification</keyword>
<keyword id="KW-1185">Reference proteome</keyword>
<accession>Q5TBC7</accession>
<accession>A0PJY6</accession>
<accession>A8K074</accession>
<accession>I6LA82</accession>
<sequence>MKSSQTFEEQTECIVNTLLMDFLSPTLQVASRNLCCVDEVDSGEPCSFDVAIIAGRLRMLGDQFNGELEASAKNVIAETIKGQTGAILQDTVESLSKTWCAQDSSLAYERAFLAVSVKLLEYMAHIAPEVVGQVAIPMTGMINGNQAIREFIQGQGGWENLES</sequence>
<feature type="chain" id="PRO_0000283003" description="Bcl-2-like protein 15">
    <location>
        <begin position="1"/>
        <end position="163"/>
    </location>
</feature>
<feature type="splice variant" id="VSP_047627" description="In isoform 2." evidence="3">
    <original>EPCSFDVAIIAGR</original>
    <variation>KSGELKSWSYSRD</variation>
    <location>
        <begin position="44"/>
        <end position="56"/>
    </location>
</feature>
<feature type="splice variant" id="VSP_047628" description="In isoform 2." evidence="3">
    <location>
        <begin position="57"/>
        <end position="163"/>
    </location>
</feature>
<feature type="sequence variant" id="VAR_031475" description="In dbSNP:rs1217381." evidence="1 2">
    <original>D</original>
    <variation>N</variation>
    <location>
        <position position="90"/>
    </location>
</feature>
<feature type="helix" evidence="6">
    <location>
        <begin position="7"/>
        <end position="23"/>
    </location>
</feature>
<feature type="helix" evidence="6">
    <location>
        <begin position="25"/>
        <end position="30"/>
    </location>
</feature>
<feature type="helix" evidence="6">
    <location>
        <begin position="50"/>
        <end position="61"/>
    </location>
</feature>
<feature type="helix" evidence="6">
    <location>
        <begin position="69"/>
        <end position="81"/>
    </location>
</feature>
<feature type="helix" evidence="6">
    <location>
        <begin position="84"/>
        <end position="102"/>
    </location>
</feature>
<feature type="strand" evidence="5">
    <location>
        <begin position="104"/>
        <end position="106"/>
    </location>
</feature>
<feature type="helix" evidence="6">
    <location>
        <begin position="108"/>
        <end position="126"/>
    </location>
</feature>
<feature type="turn" evidence="6">
    <location>
        <begin position="128"/>
        <end position="130"/>
    </location>
</feature>
<feature type="helix" evidence="6">
    <location>
        <begin position="131"/>
        <end position="134"/>
    </location>
</feature>
<feature type="helix" evidence="6">
    <location>
        <begin position="135"/>
        <end position="144"/>
    </location>
</feature>
<feature type="helix" evidence="6">
    <location>
        <begin position="146"/>
        <end position="154"/>
    </location>
</feature>
<feature type="turn" evidence="6">
    <location>
        <begin position="158"/>
        <end position="160"/>
    </location>
</feature>
<comment type="interaction">
    <interactant intactId="EBI-10247136">
        <id>Q5TBC7</id>
    </interactant>
    <interactant intactId="EBI-1044104">
        <id>P55145</id>
        <label>MANF</label>
    </interactant>
    <organismsDiffer>false</organismsDiffer>
    <experiments>2</experiments>
</comment>
<comment type="interaction">
    <interactant intactId="EBI-10247136">
        <id>Q5TBC7</id>
    </interactant>
    <interactant intactId="EBI-748397">
        <id>P50222</id>
        <label>MEOX2</label>
    </interactant>
    <organismsDiffer>false</organismsDiffer>
    <experiments>3</experiments>
</comment>
<comment type="interaction">
    <interactant intactId="EBI-10247136">
        <id>Q5TBC7</id>
    </interactant>
    <interactant intactId="EBI-747278">
        <id>P26367</id>
        <label>PAX6</label>
    </interactant>
    <organismsDiffer>false</organismsDiffer>
    <experiments>3</experiments>
</comment>
<comment type="interaction">
    <interactant intactId="EBI-10247136">
        <id>Q5TBC7</id>
    </interactant>
    <interactant intactId="EBI-347928">
        <id>P62487</id>
        <label>POLR2G</label>
    </interactant>
    <organismsDiffer>false</organismsDiffer>
    <experiments>3</experiments>
</comment>
<comment type="interaction">
    <interactant intactId="EBI-10247136">
        <id>Q5TBC7</id>
    </interactant>
    <interactant intactId="EBI-10829018">
        <id>Q04864-2</id>
        <label>REL</label>
    </interactant>
    <organismsDiffer>false</organismsDiffer>
    <experiments>3</experiments>
</comment>
<comment type="interaction">
    <interactant intactId="EBI-10247136">
        <id>Q5TBC7</id>
    </interactant>
    <interactant intactId="EBI-727004">
        <id>O00560</id>
        <label>SDCBP</label>
    </interactant>
    <organismsDiffer>false</organismsDiffer>
    <experiments>3</experiments>
</comment>
<comment type="interaction">
    <interactant intactId="EBI-10247136">
        <id>Q5TBC7</id>
    </interactant>
    <interactant intactId="EBI-13636688">
        <id>P15884-3</id>
        <label>TCF4</label>
    </interactant>
    <organismsDiffer>false</organismsDiffer>
    <experiments>3</experiments>
</comment>
<comment type="interaction">
    <interactant intactId="EBI-10247136">
        <id>Q5TBC7</id>
    </interactant>
    <interactant intactId="EBI-6427252">
        <id>Q15562</id>
        <label>TEAD2</label>
    </interactant>
    <organismsDiffer>false</organismsDiffer>
    <experiments>4</experiments>
</comment>
<comment type="interaction">
    <interactant intactId="EBI-10247136">
        <id>Q5TBC7</id>
    </interactant>
    <interactant intactId="EBI-11139477">
        <id>Q96N21</id>
        <label>TEPSIN</label>
    </interactant>
    <organismsDiffer>false</organismsDiffer>
    <experiments>3</experiments>
</comment>
<comment type="alternative products">
    <event type="alternative splicing"/>
    <isoform>
        <id>Q5TBC7-1</id>
        <name>1</name>
        <sequence type="displayed"/>
    </isoform>
    <isoform>
        <id>Q5TBC7-2</id>
        <name>2</name>
        <sequence type="described" ref="VSP_047627 VSP_047628"/>
    </isoform>
</comment>
<comment type="miscellaneous">
    <molecule>Isoform 2</molecule>
    <text evidence="4">Pro-apoptotic when overexpressed.</text>
</comment>
<comment type="online information" name="Atlas of Genetics and Cytogenetics in Oncology and Haematology">
    <link uri="https://atlasgeneticsoncology.org/gene/46259/BCL2L15"/>
</comment>